<reference key="1">
    <citation type="journal article" date="1998" name="DNA Res.">
        <title>Complete sequence and gene organization of the genome of a hyper-thermophilic archaebacterium, Pyrococcus horikoshii OT3.</title>
        <authorList>
            <person name="Kawarabayasi Y."/>
            <person name="Sawada M."/>
            <person name="Horikawa H."/>
            <person name="Haikawa Y."/>
            <person name="Hino Y."/>
            <person name="Yamamoto S."/>
            <person name="Sekine M."/>
            <person name="Baba S."/>
            <person name="Kosugi H."/>
            <person name="Hosoyama A."/>
            <person name="Nagai Y."/>
            <person name="Sakai M."/>
            <person name="Ogura K."/>
            <person name="Otsuka R."/>
            <person name="Nakazawa H."/>
            <person name="Takamiya M."/>
            <person name="Ohfuku Y."/>
            <person name="Funahashi T."/>
            <person name="Tanaka T."/>
            <person name="Kudoh Y."/>
            <person name="Yamazaki J."/>
            <person name="Kushida N."/>
            <person name="Oguchi A."/>
            <person name="Aoki K."/>
            <person name="Yoshizawa T."/>
            <person name="Nakamura Y."/>
            <person name="Robb F.T."/>
            <person name="Horikoshi K."/>
            <person name="Masuchi Y."/>
            <person name="Shizuya H."/>
            <person name="Kikuchi H."/>
        </authorList>
    </citation>
    <scope>NUCLEOTIDE SEQUENCE [LARGE SCALE GENOMIC DNA]</scope>
    <source>
        <strain>ATCC 700860 / DSM 12428 / JCM 9974 / NBRC 100139 / OT-3</strain>
    </source>
</reference>
<sequence>MIYRIISHIPKIFFKPAYDLYERYLIEKVKSGVLPKHVAIIMDGNRRWARKHEKPPWYGHLFGSKKLEEILEWCHELGIRILTVYAFSTENFKRSKEEVDRLMKLFEEKFRELVTDKRVHEYGVRVNVIGRKELLPKSVRDAVEEAERATRKYNNYILNVALAYGGRSEIVDAVKDIARDVISGKLRIEEIDEELLRRYLYVPNMPDPDIVIRTGGEVRISNFLLYQIAYSELFFVDVYFPEFRKIDFLRIIREFQKRERRFGR</sequence>
<evidence type="ECO:0000255" key="1">
    <source>
        <dbReference type="HAMAP-Rule" id="MF_01139"/>
    </source>
</evidence>
<name>UPPS_PYRHO</name>
<protein>
    <recommendedName>
        <fullName evidence="1">Tritrans,polycis-undecaprenyl-diphosphate synthase (geranylgeranyl-diphosphate specific)</fullName>
        <ecNumber evidence="1">2.5.1.89</ecNumber>
    </recommendedName>
    <alternativeName>
        <fullName evidence="1">Undecaprenyl diphosphate synthase</fullName>
        <shortName evidence="1">UDS</shortName>
    </alternativeName>
    <alternativeName>
        <fullName evidence="1">Undecaprenyl pyrophosphate synthase</fullName>
        <shortName evidence="1">UPP synthase</shortName>
    </alternativeName>
</protein>
<gene>
    <name evidence="1" type="primary">uppS</name>
    <name type="ordered locus">PH1590</name>
</gene>
<proteinExistence type="inferred from homology"/>
<keyword id="KW-0460">Magnesium</keyword>
<keyword id="KW-0479">Metal-binding</keyword>
<keyword id="KW-0808">Transferase</keyword>
<organism>
    <name type="scientific">Pyrococcus horikoshii (strain ATCC 700860 / DSM 12428 / JCM 9974 / NBRC 100139 / OT-3)</name>
    <dbReference type="NCBI Taxonomy" id="70601"/>
    <lineage>
        <taxon>Archaea</taxon>
        <taxon>Methanobacteriati</taxon>
        <taxon>Methanobacteriota</taxon>
        <taxon>Thermococci</taxon>
        <taxon>Thermococcales</taxon>
        <taxon>Thermococcaceae</taxon>
        <taxon>Pyrococcus</taxon>
    </lineage>
</organism>
<comment type="function">
    <text evidence="1">Catalyzes the sequential condensation of isopentenyl diphosphate (IPP) with geranylgeranyl diphosphate (GGPP) to yield (2Z,6Z,10Z,14Z,18Z,22Z,26Z,30E,34E,38E)-undecaprenyl diphosphate (tritrans,heptacis-UPP). It is probably the precursor of glycosyl carrier lipids.</text>
</comment>
<comment type="catalytic activity">
    <reaction evidence="1">
        <text>geranylgeranyl diphosphate + 7 isopentenyl diphosphate = tri-trans,hepta-cis-undecaprenyl diphosphate + 7 diphosphate</text>
        <dbReference type="Rhea" id="RHEA:27622"/>
        <dbReference type="ChEBI" id="CHEBI:33019"/>
        <dbReference type="ChEBI" id="CHEBI:57533"/>
        <dbReference type="ChEBI" id="CHEBI:60388"/>
        <dbReference type="ChEBI" id="CHEBI:128769"/>
        <dbReference type="EC" id="2.5.1.89"/>
    </reaction>
</comment>
<comment type="cofactor">
    <cofactor evidence="1">
        <name>Mg(2+)</name>
        <dbReference type="ChEBI" id="CHEBI:18420"/>
    </cofactor>
    <text evidence="1">Binds 2 magnesium ions per subunit.</text>
</comment>
<comment type="subunit">
    <text evidence="1">Homodimer.</text>
</comment>
<comment type="similarity">
    <text evidence="1">Belongs to the UPP synthase family.</text>
</comment>
<feature type="chain" id="PRO_0000123739" description="Tritrans,polycis-undecaprenyl-diphosphate synthase (geranylgeranyl-diphosphate specific)">
    <location>
        <begin position="1"/>
        <end position="264"/>
    </location>
</feature>
<feature type="active site" evidence="1">
    <location>
        <position position="43"/>
    </location>
</feature>
<feature type="active site" description="Proton acceptor" evidence="1">
    <location>
        <position position="91"/>
    </location>
</feature>
<feature type="binding site" evidence="1">
    <location>
        <position position="43"/>
    </location>
    <ligand>
        <name>Mg(2+)</name>
        <dbReference type="ChEBI" id="CHEBI:18420"/>
    </ligand>
</feature>
<feature type="binding site" evidence="1">
    <location>
        <begin position="44"/>
        <end position="47"/>
    </location>
    <ligand>
        <name>substrate</name>
    </ligand>
</feature>
<feature type="binding site" evidence="1">
    <location>
        <position position="48"/>
    </location>
    <ligand>
        <name>substrate</name>
    </ligand>
</feature>
<feature type="binding site" evidence="1">
    <location>
        <position position="60"/>
    </location>
    <ligand>
        <name>substrate</name>
    </ligand>
</feature>
<feature type="binding site" evidence="1">
    <location>
        <begin position="88"/>
        <end position="90"/>
    </location>
    <ligand>
        <name>substrate</name>
    </ligand>
</feature>
<feature type="binding site" evidence="1">
    <location>
        <position position="92"/>
    </location>
    <ligand>
        <name>substrate</name>
    </ligand>
</feature>
<feature type="binding site" evidence="1">
    <location>
        <position position="94"/>
    </location>
    <ligand>
        <name>substrate</name>
    </ligand>
</feature>
<feature type="binding site" evidence="1">
    <location>
        <position position="213"/>
    </location>
    <ligand>
        <name>substrate</name>
    </ligand>
</feature>
<feature type="binding site" evidence="1">
    <location>
        <begin position="219"/>
        <end position="221"/>
    </location>
    <ligand>
        <name>substrate</name>
    </ligand>
</feature>
<feature type="binding site" evidence="1">
    <location>
        <position position="232"/>
    </location>
    <ligand>
        <name>Mg(2+)</name>
        <dbReference type="ChEBI" id="CHEBI:18420"/>
    </ligand>
</feature>
<dbReference type="EC" id="2.5.1.89" evidence="1"/>
<dbReference type="EMBL" id="BA000001">
    <property type="protein sequence ID" value="BAA30702.1"/>
    <property type="molecule type" value="Genomic_DNA"/>
</dbReference>
<dbReference type="PIR" id="F71037">
    <property type="entry name" value="F71037"/>
</dbReference>
<dbReference type="RefSeq" id="WP_010885664.1">
    <property type="nucleotide sequence ID" value="NC_000961.1"/>
</dbReference>
<dbReference type="SMR" id="O59258"/>
<dbReference type="STRING" id="70601.gene:9378580"/>
<dbReference type="EnsemblBacteria" id="BAA30702">
    <property type="protein sequence ID" value="BAA30702"/>
    <property type="gene ID" value="BAA30702"/>
</dbReference>
<dbReference type="GeneID" id="1442443"/>
<dbReference type="KEGG" id="pho:PH1590"/>
<dbReference type="eggNOG" id="arCOG01532">
    <property type="taxonomic scope" value="Archaea"/>
</dbReference>
<dbReference type="OrthoDB" id="8293at2157"/>
<dbReference type="Proteomes" id="UP000000752">
    <property type="component" value="Chromosome"/>
</dbReference>
<dbReference type="GO" id="GO:0045547">
    <property type="term" value="F:ditrans,polycis-polyprenyl diphosphate synthase [(2E,6E)-farnesyl diphosphate specific] activity"/>
    <property type="evidence" value="ECO:0007669"/>
    <property type="project" value="TreeGrafter"/>
</dbReference>
<dbReference type="GO" id="GO:0000287">
    <property type="term" value="F:magnesium ion binding"/>
    <property type="evidence" value="ECO:0007669"/>
    <property type="project" value="UniProtKB-UniRule"/>
</dbReference>
<dbReference type="GO" id="GO:0016094">
    <property type="term" value="P:polyprenol biosynthetic process"/>
    <property type="evidence" value="ECO:0007669"/>
    <property type="project" value="TreeGrafter"/>
</dbReference>
<dbReference type="CDD" id="cd00475">
    <property type="entry name" value="Cis_IPPS"/>
    <property type="match status" value="1"/>
</dbReference>
<dbReference type="FunFam" id="3.40.1180.10:FF:000003">
    <property type="entry name" value="Isoprenyl transferase 2"/>
    <property type="match status" value="1"/>
</dbReference>
<dbReference type="Gene3D" id="3.40.1180.10">
    <property type="entry name" value="Decaprenyl diphosphate synthase-like"/>
    <property type="match status" value="1"/>
</dbReference>
<dbReference type="HAMAP" id="MF_01139">
    <property type="entry name" value="ISPT"/>
    <property type="match status" value="1"/>
</dbReference>
<dbReference type="InterPro" id="IPR001441">
    <property type="entry name" value="UPP_synth-like"/>
</dbReference>
<dbReference type="InterPro" id="IPR018520">
    <property type="entry name" value="UPP_synth-like_CS"/>
</dbReference>
<dbReference type="InterPro" id="IPR036424">
    <property type="entry name" value="UPP_synth-like_sf"/>
</dbReference>
<dbReference type="NCBIfam" id="TIGR00055">
    <property type="entry name" value="uppS"/>
    <property type="match status" value="1"/>
</dbReference>
<dbReference type="PANTHER" id="PTHR10291:SF43">
    <property type="entry name" value="DEHYDRODOLICHYL DIPHOSPHATE SYNTHASE COMPLEX SUBUNIT DHDDS"/>
    <property type="match status" value="1"/>
</dbReference>
<dbReference type="PANTHER" id="PTHR10291">
    <property type="entry name" value="DEHYDRODOLICHYL DIPHOSPHATE SYNTHASE FAMILY MEMBER"/>
    <property type="match status" value="1"/>
</dbReference>
<dbReference type="Pfam" id="PF01255">
    <property type="entry name" value="Prenyltransf"/>
    <property type="match status" value="1"/>
</dbReference>
<dbReference type="SUPFAM" id="SSF64005">
    <property type="entry name" value="Undecaprenyl diphosphate synthase"/>
    <property type="match status" value="1"/>
</dbReference>
<dbReference type="PROSITE" id="PS01066">
    <property type="entry name" value="UPP_SYNTHASE"/>
    <property type="match status" value="1"/>
</dbReference>
<accession>O59258</accession>